<dbReference type="EC" id="2.1.1.176" evidence="1"/>
<dbReference type="EMBL" id="FM180568">
    <property type="protein sequence ID" value="CAS11099.1"/>
    <property type="molecule type" value="Genomic_DNA"/>
</dbReference>
<dbReference type="RefSeq" id="WP_001339962.1">
    <property type="nucleotide sequence ID" value="NC_011601.1"/>
</dbReference>
<dbReference type="SMR" id="B7UK12"/>
<dbReference type="KEGG" id="ecg:E2348C_3551"/>
<dbReference type="HOGENOM" id="CLU_005316_0_4_6"/>
<dbReference type="Proteomes" id="UP000008205">
    <property type="component" value="Chromosome"/>
</dbReference>
<dbReference type="GO" id="GO:0005829">
    <property type="term" value="C:cytosol"/>
    <property type="evidence" value="ECO:0007669"/>
    <property type="project" value="TreeGrafter"/>
</dbReference>
<dbReference type="GO" id="GO:0003723">
    <property type="term" value="F:RNA binding"/>
    <property type="evidence" value="ECO:0007669"/>
    <property type="project" value="UniProtKB-KW"/>
</dbReference>
<dbReference type="GO" id="GO:0009383">
    <property type="term" value="F:rRNA (cytosine-C5-)-methyltransferase activity"/>
    <property type="evidence" value="ECO:0007669"/>
    <property type="project" value="TreeGrafter"/>
</dbReference>
<dbReference type="GO" id="GO:0006355">
    <property type="term" value="P:regulation of DNA-templated transcription"/>
    <property type="evidence" value="ECO:0007669"/>
    <property type="project" value="InterPro"/>
</dbReference>
<dbReference type="GO" id="GO:0070475">
    <property type="term" value="P:rRNA base methylation"/>
    <property type="evidence" value="ECO:0007669"/>
    <property type="project" value="TreeGrafter"/>
</dbReference>
<dbReference type="CDD" id="cd02440">
    <property type="entry name" value="AdoMet_MTases"/>
    <property type="match status" value="1"/>
</dbReference>
<dbReference type="CDD" id="cd00620">
    <property type="entry name" value="Methyltransferase_Sun"/>
    <property type="match status" value="1"/>
</dbReference>
<dbReference type="FunFam" id="1.10.287.730:FF:000001">
    <property type="entry name" value="Ribosomal RNA small subunit methyltransferase B"/>
    <property type="match status" value="1"/>
</dbReference>
<dbReference type="FunFam" id="1.10.940.10:FF:000002">
    <property type="entry name" value="Ribosomal RNA small subunit methyltransferase B"/>
    <property type="match status" value="1"/>
</dbReference>
<dbReference type="FunFam" id="3.30.70.1170:FF:000002">
    <property type="entry name" value="Ribosomal RNA small subunit methyltransferase B"/>
    <property type="match status" value="1"/>
</dbReference>
<dbReference type="FunFam" id="3.40.50.150:FF:000022">
    <property type="entry name" value="Ribosomal RNA small subunit methyltransferase B"/>
    <property type="match status" value="1"/>
</dbReference>
<dbReference type="Gene3D" id="1.10.287.730">
    <property type="entry name" value="Helix hairpin bin"/>
    <property type="match status" value="1"/>
</dbReference>
<dbReference type="Gene3D" id="1.10.940.10">
    <property type="entry name" value="NusB-like"/>
    <property type="match status" value="1"/>
</dbReference>
<dbReference type="Gene3D" id="3.30.70.1170">
    <property type="entry name" value="Sun protein, domain 3"/>
    <property type="match status" value="1"/>
</dbReference>
<dbReference type="Gene3D" id="3.40.50.150">
    <property type="entry name" value="Vaccinia Virus protein VP39"/>
    <property type="match status" value="1"/>
</dbReference>
<dbReference type="HAMAP" id="MF_01856">
    <property type="entry name" value="16SrRNA_methyltr_B"/>
    <property type="match status" value="1"/>
</dbReference>
<dbReference type="InterPro" id="IPR049560">
    <property type="entry name" value="MeTrfase_RsmB-F_NOP2_cat"/>
</dbReference>
<dbReference type="InterPro" id="IPR001678">
    <property type="entry name" value="MeTrfase_RsmB-F_NOP2_dom"/>
</dbReference>
<dbReference type="InterPro" id="IPR035926">
    <property type="entry name" value="NusB-like_sf"/>
</dbReference>
<dbReference type="InterPro" id="IPR006027">
    <property type="entry name" value="NusB_RsmB_TIM44"/>
</dbReference>
<dbReference type="InterPro" id="IPR023267">
    <property type="entry name" value="RCMT"/>
</dbReference>
<dbReference type="InterPro" id="IPR004573">
    <property type="entry name" value="rRNA_ssu_MeTfrase_B"/>
</dbReference>
<dbReference type="InterPro" id="IPR023541">
    <property type="entry name" value="rRNA_ssu_MeTfrase_B_ent"/>
</dbReference>
<dbReference type="InterPro" id="IPR054728">
    <property type="entry name" value="RsmB-like_ferredoxin"/>
</dbReference>
<dbReference type="InterPro" id="IPR048019">
    <property type="entry name" value="RsmB-like_N"/>
</dbReference>
<dbReference type="InterPro" id="IPR018314">
    <property type="entry name" value="RsmB/NOL1/NOP2-like_CS"/>
</dbReference>
<dbReference type="InterPro" id="IPR029063">
    <property type="entry name" value="SAM-dependent_MTases_sf"/>
</dbReference>
<dbReference type="NCBIfam" id="NF008149">
    <property type="entry name" value="PRK10901.1"/>
    <property type="match status" value="1"/>
</dbReference>
<dbReference type="NCBIfam" id="NF011494">
    <property type="entry name" value="PRK14902.1"/>
    <property type="match status" value="1"/>
</dbReference>
<dbReference type="NCBIfam" id="TIGR00563">
    <property type="entry name" value="rsmB"/>
    <property type="match status" value="1"/>
</dbReference>
<dbReference type="PANTHER" id="PTHR22807:SF61">
    <property type="entry name" value="NOL1_NOP2_SUN FAMILY PROTEIN _ ANTITERMINATION NUSB DOMAIN-CONTAINING PROTEIN"/>
    <property type="match status" value="1"/>
</dbReference>
<dbReference type="PANTHER" id="PTHR22807">
    <property type="entry name" value="NOP2 YEAST -RELATED NOL1/NOP2/FMU SUN DOMAIN-CONTAINING"/>
    <property type="match status" value="1"/>
</dbReference>
<dbReference type="Pfam" id="PF01189">
    <property type="entry name" value="Methyltr_RsmB-F"/>
    <property type="match status" value="1"/>
</dbReference>
<dbReference type="Pfam" id="PF01029">
    <property type="entry name" value="NusB"/>
    <property type="match status" value="1"/>
</dbReference>
<dbReference type="Pfam" id="PF22458">
    <property type="entry name" value="RsmF-B_ferredox"/>
    <property type="match status" value="1"/>
</dbReference>
<dbReference type="PRINTS" id="PR02008">
    <property type="entry name" value="RCMTFAMILY"/>
</dbReference>
<dbReference type="SUPFAM" id="SSF48013">
    <property type="entry name" value="NusB-like"/>
    <property type="match status" value="1"/>
</dbReference>
<dbReference type="SUPFAM" id="SSF53335">
    <property type="entry name" value="S-adenosyl-L-methionine-dependent methyltransferases"/>
    <property type="match status" value="1"/>
</dbReference>
<dbReference type="PROSITE" id="PS01153">
    <property type="entry name" value="NOL1_NOP2_SUN"/>
    <property type="match status" value="1"/>
</dbReference>
<dbReference type="PROSITE" id="PS51686">
    <property type="entry name" value="SAM_MT_RSMB_NOP"/>
    <property type="match status" value="1"/>
</dbReference>
<gene>
    <name evidence="1" type="primary">rsmB</name>
    <name evidence="1" type="synonym">sun</name>
    <name type="ordered locus">E2348C_3551</name>
</gene>
<sequence length="429" mass="48304">MKKQRNLRSMAAQAVEQVVEQGQSLSNILPPLQQKVSDKDKALLQELCFGVLRTLSQLDWLINKLMARPMTGKQRTVHYLIMVGLYQLLYTRIPPHAALAETVEGAVAIKRPQLKGLINGVLRQFQRQQEELLAEFNASDARYLHPSWLLKRLQKAYPEQWQSIVEANNQRPPMWLRVNRTHHSRDSWLALLDEAGMKGFPHADYPDAVRLETPAPVHALPGFEDGWVTVQDASAQGCMTWLAPQNGEHILDLCAAPGGKTTHILEVAPEAQVVAVDIDEQRLSRVYDNLKRLGMKATVKQGDGRYPSQWCGKQQFDRILLDAPCSATGVIRRHPDIKWLRRDRDIPELAQLQSEILDAIWPHLKSGGTLVYATCSVLPEENSLQIKAFLQRTADAELCETGTPEQPGKQNLPGAEEGDGFFYAKLIKK</sequence>
<feature type="chain" id="PRO_1000188688" description="Ribosomal RNA small subunit methyltransferase B">
    <location>
        <begin position="1"/>
        <end position="429"/>
    </location>
</feature>
<feature type="active site" description="Nucleophile" evidence="1">
    <location>
        <position position="375"/>
    </location>
</feature>
<feature type="binding site" evidence="1">
    <location>
        <begin position="254"/>
        <end position="260"/>
    </location>
    <ligand>
        <name>S-adenosyl-L-methionine</name>
        <dbReference type="ChEBI" id="CHEBI:59789"/>
    </ligand>
</feature>
<feature type="binding site" evidence="1">
    <location>
        <position position="277"/>
    </location>
    <ligand>
        <name>S-adenosyl-L-methionine</name>
        <dbReference type="ChEBI" id="CHEBI:59789"/>
    </ligand>
</feature>
<feature type="binding site" evidence="1">
    <location>
        <position position="303"/>
    </location>
    <ligand>
        <name>S-adenosyl-L-methionine</name>
        <dbReference type="ChEBI" id="CHEBI:59789"/>
    </ligand>
</feature>
<feature type="binding site" evidence="1">
    <location>
        <position position="322"/>
    </location>
    <ligand>
        <name>S-adenosyl-L-methionine</name>
        <dbReference type="ChEBI" id="CHEBI:59789"/>
    </ligand>
</feature>
<evidence type="ECO:0000255" key="1">
    <source>
        <dbReference type="HAMAP-Rule" id="MF_01856"/>
    </source>
</evidence>
<comment type="function">
    <text evidence="1">Specifically methylates the cytosine at position 967 (m5C967) of 16S rRNA.</text>
</comment>
<comment type="catalytic activity">
    <reaction evidence="1">
        <text>cytidine(967) in 16S rRNA + S-adenosyl-L-methionine = 5-methylcytidine(967) in 16S rRNA + S-adenosyl-L-homocysteine + H(+)</text>
        <dbReference type="Rhea" id="RHEA:42748"/>
        <dbReference type="Rhea" id="RHEA-COMP:10219"/>
        <dbReference type="Rhea" id="RHEA-COMP:10220"/>
        <dbReference type="ChEBI" id="CHEBI:15378"/>
        <dbReference type="ChEBI" id="CHEBI:57856"/>
        <dbReference type="ChEBI" id="CHEBI:59789"/>
        <dbReference type="ChEBI" id="CHEBI:74483"/>
        <dbReference type="ChEBI" id="CHEBI:82748"/>
        <dbReference type="EC" id="2.1.1.176"/>
    </reaction>
</comment>
<comment type="subcellular location">
    <subcellularLocation>
        <location evidence="1">Cytoplasm</location>
    </subcellularLocation>
</comment>
<comment type="similarity">
    <text evidence="1">Belongs to the class I-like SAM-binding methyltransferase superfamily. RsmB/NOP family.</text>
</comment>
<proteinExistence type="inferred from homology"/>
<keyword id="KW-0963">Cytoplasm</keyword>
<keyword id="KW-0489">Methyltransferase</keyword>
<keyword id="KW-1185">Reference proteome</keyword>
<keyword id="KW-0694">RNA-binding</keyword>
<keyword id="KW-0698">rRNA processing</keyword>
<keyword id="KW-0949">S-adenosyl-L-methionine</keyword>
<keyword id="KW-0808">Transferase</keyword>
<name>RSMB_ECO27</name>
<organism>
    <name type="scientific">Escherichia coli O127:H6 (strain E2348/69 / EPEC)</name>
    <dbReference type="NCBI Taxonomy" id="574521"/>
    <lineage>
        <taxon>Bacteria</taxon>
        <taxon>Pseudomonadati</taxon>
        <taxon>Pseudomonadota</taxon>
        <taxon>Gammaproteobacteria</taxon>
        <taxon>Enterobacterales</taxon>
        <taxon>Enterobacteriaceae</taxon>
        <taxon>Escherichia</taxon>
    </lineage>
</organism>
<accession>B7UK12</accession>
<reference key="1">
    <citation type="journal article" date="2009" name="J. Bacteriol.">
        <title>Complete genome sequence and comparative genome analysis of enteropathogenic Escherichia coli O127:H6 strain E2348/69.</title>
        <authorList>
            <person name="Iguchi A."/>
            <person name="Thomson N.R."/>
            <person name="Ogura Y."/>
            <person name="Saunders D."/>
            <person name="Ooka T."/>
            <person name="Henderson I.R."/>
            <person name="Harris D."/>
            <person name="Asadulghani M."/>
            <person name="Kurokawa K."/>
            <person name="Dean P."/>
            <person name="Kenny B."/>
            <person name="Quail M.A."/>
            <person name="Thurston S."/>
            <person name="Dougan G."/>
            <person name="Hayashi T."/>
            <person name="Parkhill J."/>
            <person name="Frankel G."/>
        </authorList>
    </citation>
    <scope>NUCLEOTIDE SEQUENCE [LARGE SCALE GENOMIC DNA]</scope>
    <source>
        <strain>E2348/69 / EPEC</strain>
    </source>
</reference>
<protein>
    <recommendedName>
        <fullName evidence="1">Ribosomal RNA small subunit methyltransferase B</fullName>
        <ecNumber evidence="1">2.1.1.176</ecNumber>
    </recommendedName>
    <alternativeName>
        <fullName evidence="1">16S rRNA m5C967 methyltransferase</fullName>
    </alternativeName>
    <alternativeName>
        <fullName evidence="1">rRNA (cytosine-C(5)-)-methyltransferase RsmB</fullName>
    </alternativeName>
</protein>